<name>S29A4_HUMAN</name>
<proteinExistence type="evidence at protein level"/>
<organism>
    <name type="scientific">Homo sapiens</name>
    <name type="common">Human</name>
    <dbReference type="NCBI Taxonomy" id="9606"/>
    <lineage>
        <taxon>Eukaryota</taxon>
        <taxon>Metazoa</taxon>
        <taxon>Chordata</taxon>
        <taxon>Craniata</taxon>
        <taxon>Vertebrata</taxon>
        <taxon>Euteleostomi</taxon>
        <taxon>Mammalia</taxon>
        <taxon>Eutheria</taxon>
        <taxon>Euarchontoglires</taxon>
        <taxon>Primates</taxon>
        <taxon>Haplorrhini</taxon>
        <taxon>Catarrhini</taxon>
        <taxon>Hominidae</taxon>
        <taxon>Homo</taxon>
    </lineage>
</organism>
<sequence>MGSVGSQRLEEPSVAGTPDPGVVMSFTFDSHQLEEAAEAAQGQGLRARGVPAFTDTTLDEPVPDDRYHAIYFAMLLAGVGFLLPYNSFITDVDYLHHKYPGTSIVFDMSLTYILVALAAVLLNNVLVERLTLHTRITAGYLLALGPLLFISICDVWLQLFSRDQAYAINLAAVGTVAFGCTVQQSSFYGYTGMLPKRYTQGVMTGESTAGVMISLSRILTKLLLPDERASTLIFFLVSVALELLCFLLHLLVRRSRFVLFYTTRPRDSHRGRPGLGRGYGYRVHHDVVAGDVHFEHPAPALAPNESPKDSPAHEVTGSGGAYMRFDVPRPRVQRSWPTFRALLLHRYVVARVIWADMLSIAVTYFITLCLFPGLESEIRHCILGEWLPILIMAVFNLSDFVGKILAALPVDWRGTHLLACSCLRVVFIPLFILCVYPSGMPALRHPAWPCIFSLLMGISNGYFGSVPMILAAGKVSPKQRELAGNTMTVSYMSGLTLGSAVAYCTYSLTRDAHGSCLHASTANGSILAGL</sequence>
<feature type="chain" id="PRO_0000326251" description="Equilibrative nucleoside transporter 4">
    <location>
        <begin position="1"/>
        <end position="530"/>
    </location>
</feature>
<feature type="topological domain" description="Extracellular" evidence="2">
    <location>
        <begin position="1"/>
        <end position="68"/>
    </location>
</feature>
<feature type="transmembrane region" description="Helical" evidence="2">
    <location>
        <begin position="69"/>
        <end position="89"/>
    </location>
</feature>
<feature type="topological domain" description="Cytoplasmic" evidence="2">
    <location>
        <begin position="90"/>
        <end position="101"/>
    </location>
</feature>
<feature type="transmembrane region" description="Helical" evidence="2">
    <location>
        <begin position="102"/>
        <end position="122"/>
    </location>
</feature>
<feature type="topological domain" description="Extracellular" evidence="2">
    <location>
        <begin position="123"/>
        <end position="139"/>
    </location>
</feature>
<feature type="transmembrane region" description="Helical" evidence="2">
    <location>
        <begin position="140"/>
        <end position="160"/>
    </location>
</feature>
<feature type="topological domain" description="Cytoplasmic" evidence="2">
    <location>
        <begin position="161"/>
        <end position="166"/>
    </location>
</feature>
<feature type="transmembrane region" description="Helical" evidence="2">
    <location>
        <begin position="167"/>
        <end position="187"/>
    </location>
</feature>
<feature type="topological domain" description="Extracellular" evidence="2">
    <location>
        <begin position="188"/>
        <end position="231"/>
    </location>
</feature>
<feature type="transmembrane region" description="Helical" evidence="2">
    <location>
        <begin position="232"/>
        <end position="252"/>
    </location>
</feature>
<feature type="topological domain" description="Cytoplasmic" evidence="2">
    <location>
        <begin position="253"/>
        <end position="351"/>
    </location>
</feature>
<feature type="transmembrane region" description="Helical" evidence="2">
    <location>
        <begin position="352"/>
        <end position="372"/>
    </location>
</feature>
<feature type="topological domain" description="Extracellular" evidence="2">
    <location>
        <begin position="373"/>
        <end position="381"/>
    </location>
</feature>
<feature type="transmembrane region" description="Helical" evidence="2">
    <location>
        <begin position="382"/>
        <end position="402"/>
    </location>
</feature>
<feature type="topological domain" description="Cytoplasmic" evidence="2">
    <location>
        <begin position="403"/>
        <end position="416"/>
    </location>
</feature>
<feature type="transmembrane region" description="Helical" evidence="2">
    <location>
        <begin position="417"/>
        <end position="437"/>
    </location>
</feature>
<feature type="topological domain" description="Extracellular" evidence="2">
    <location>
        <begin position="438"/>
        <end position="450"/>
    </location>
</feature>
<feature type="transmembrane region" description="Helical" evidence="2">
    <location>
        <begin position="451"/>
        <end position="471"/>
    </location>
</feature>
<feature type="topological domain" description="Cytoplasmic" evidence="2">
    <location>
        <begin position="472"/>
        <end position="486"/>
    </location>
</feature>
<feature type="transmembrane region" description="Helical" evidence="2">
    <location>
        <begin position="487"/>
        <end position="509"/>
    </location>
</feature>
<feature type="topological domain" description="Extracellular" evidence="2">
    <location>
        <begin position="510"/>
        <end position="530"/>
    </location>
</feature>
<feature type="region of interest" description="Disordered" evidence="3">
    <location>
        <begin position="1"/>
        <end position="21"/>
    </location>
</feature>
<feature type="site" description="Essential for cation selectivity" evidence="7">
    <location>
        <position position="206"/>
    </location>
</feature>
<feature type="glycosylation site" description="N-linked (GlcNAc...) asparagine" evidence="2">
    <location>
        <position position="523"/>
    </location>
</feature>
<feature type="splice variant" id="VSP_032647" description="In isoform 2." evidence="17">
    <original>GYLLALGPLLFISICDVWLQLFSRDQAYAINLAAVGTVAFGCTV</original>
    <variation>ASATCGCSSSLGTRPTPSTWPLWAPWPSAA</variation>
    <location>
        <begin position="139"/>
        <end position="182"/>
    </location>
</feature>
<feature type="sequence variant" id="VAR_040044" description="In dbSNP:rs17854505." evidence="5">
    <original>V</original>
    <variation>E</variation>
    <location>
        <position position="79"/>
    </location>
</feature>
<feature type="sequence variant" id="VAR_040045" description="In dbSNP:rs17855675." evidence="5">
    <original>N</original>
    <variation>K</variation>
    <location>
        <position position="124"/>
    </location>
</feature>
<feature type="sequence variant" id="VAR_040046" description="In dbSNP:rs17857336." evidence="5">
    <original>P</original>
    <variation>T</variation>
    <location>
        <position position="429"/>
    </location>
</feature>
<feature type="mutagenesis site" description="No significant change in dopamine, serotonin and MPP(+) uptake." evidence="9">
    <original>D</original>
    <variation>A</variation>
    <location>
        <position position="91"/>
    </location>
</feature>
<feature type="mutagenesis site" description="Loss of dopamine, serotonin and MPP(+) uptake." evidence="9">
    <original>D</original>
    <variation>A</variation>
    <location>
        <position position="107"/>
    </location>
</feature>
<feature type="mutagenesis site" description="No significant change in dopamine, serotonin and MPP(+) uptake." evidence="9">
    <original>E</original>
    <variation>A</variation>
    <location>
        <position position="128"/>
    </location>
</feature>
<feature type="mutagenesis site" description="Loss of dopamine, serotonin and MPP(+) uptake; increased uridine uptake." evidence="9">
    <original>D</original>
    <variation>A</variation>
    <location>
        <position position="154"/>
    </location>
</feature>
<feature type="mutagenesis site" description="Loss of dopamine, serotonin and MPP(+) uptake." evidence="9">
    <original>D</original>
    <variation>A</variation>
    <location>
        <position position="163"/>
    </location>
</feature>
<feature type="mutagenesis site" description="Loss of dopamine, serotonin and MPP(+) uptake; gain of uridine transport activity." evidence="9">
    <original>E</original>
    <variation>A</variation>
    <location>
        <position position="206"/>
    </location>
</feature>
<feature type="mutagenesis site" description="No change in dopamine, serotonin and MPP(+) uptake; no uridine uptake activity." evidence="9">
    <original>E</original>
    <variation>D</variation>
    <location>
        <position position="206"/>
    </location>
</feature>
<feature type="mutagenesis site" description="Loss of dopamine, serotonin, adenosine and MPP(+) uptake; gain of uridine transport activity." evidence="7 9">
    <original>E</original>
    <variation>Q</variation>
    <location>
        <position position="206"/>
    </location>
</feature>
<feature type="mutagenesis site" description="Loss of dopamine, serotonin and MPP(+) uptake; no uridine uptake activity." evidence="9">
    <original>E</original>
    <variation>R</variation>
    <location>
        <position position="206"/>
    </location>
</feature>
<feature type="mutagenesis site" description="Reduced dopamine, serotonin and MPP(+) uptake." evidence="9">
    <original>T</original>
    <variation>A</variation>
    <location>
        <position position="220"/>
    </location>
</feature>
<feature type="mutagenesis site" description="Loss of dopamine, serotonin and MPP(+) uptake." evidence="9">
    <original>T</original>
    <variation>I</variation>
    <location>
        <position position="220"/>
    </location>
</feature>
<feature type="mutagenesis site" description="Reduced dopamine, serotonin and MPP(+) uptake." evidence="9">
    <original>T</original>
    <variation>S</variation>
    <location>
        <position position="220"/>
    </location>
</feature>
<feature type="mutagenesis site" description="Functional with slight increased dopamine, serotonin and MPP(+) uptake." evidence="9">
    <original>E</original>
    <variation>A</variation>
    <location>
        <position position="227"/>
    </location>
</feature>
<feature type="mutagenesis site" description="Reduced dopamine, serotonin and MPP(+) uptake." evidence="9">
    <original>E</original>
    <variation>A</variation>
    <location>
        <position position="242"/>
    </location>
</feature>
<feature type="mutagenesis site" description="Loss of dopamine, serotonin and MPP(+) uptake." evidence="9">
    <original>W</original>
    <variation>A</variation>
    <location>
        <position position="336"/>
    </location>
</feature>
<feature type="mutagenesis site" description="Functional with increased dopamine, serotonin and MPP(+) uptake." evidence="9">
    <original>E</original>
    <variation>A</variation>
    <location>
        <position position="375"/>
    </location>
</feature>
<feature type="mutagenesis site" description="No change in adenosine uptake." evidence="7">
    <original>E</original>
    <variation>Q</variation>
    <location>
        <position position="375"/>
    </location>
</feature>
<feature type="sequence conflict" description="In Ref. 2; BAC03836." evidence="19" ref="2">
    <original>S</original>
    <variation>C</variation>
    <location>
        <position position="25"/>
    </location>
</feature>
<feature type="sequence conflict" description="In Ref. 2; BAC03836." evidence="19" ref="2">
    <original>Q</original>
    <variation>R</variation>
    <location>
        <position position="41"/>
    </location>
</feature>
<feature type="sequence conflict" description="In Ref. 2; BAC03836." evidence="19" ref="2">
    <original>K</original>
    <variation>R</variation>
    <location>
        <position position="196"/>
    </location>
</feature>
<feature type="sequence conflict" description="In Ref. 2; BAC11612." evidence="19" ref="2">
    <original>Y</original>
    <variation>H</variation>
    <location>
        <position position="261"/>
    </location>
</feature>
<feature type="sequence conflict" description="In Ref. 2; BAC03836." evidence="19" ref="2">
    <original>L</original>
    <variation>P</variation>
    <location>
        <position position="301"/>
    </location>
</feature>
<accession>Q7RTT9</accession>
<accession>Q6PJ08</accession>
<accession>Q86WY8</accession>
<accession>Q8NAR3</accession>
<accession>Q8NBM2</accession>
<keyword id="KW-0025">Alternative splicing</keyword>
<keyword id="KW-1003">Cell membrane</keyword>
<keyword id="KW-0325">Glycoprotein</keyword>
<keyword id="KW-0472">Membrane</keyword>
<keyword id="KW-1267">Proteomics identification</keyword>
<keyword id="KW-1185">Reference proteome</keyword>
<keyword id="KW-0812">Transmembrane</keyword>
<keyword id="KW-1133">Transmembrane helix</keyword>
<keyword id="KW-0813">Transport</keyword>
<evidence type="ECO:0000250" key="1">
    <source>
        <dbReference type="UniProtKB" id="Q8R139"/>
    </source>
</evidence>
<evidence type="ECO:0000255" key="2"/>
<evidence type="ECO:0000256" key="3">
    <source>
        <dbReference type="SAM" id="MobiDB-lite"/>
    </source>
</evidence>
<evidence type="ECO:0000269" key="4">
    <source>
    </source>
</evidence>
<evidence type="ECO:0000269" key="5">
    <source>
    </source>
</evidence>
<evidence type="ECO:0000269" key="6">
    <source>
    </source>
</evidence>
<evidence type="ECO:0000269" key="7">
    <source>
    </source>
</evidence>
<evidence type="ECO:0000269" key="8">
    <source>
    </source>
</evidence>
<evidence type="ECO:0000269" key="9">
    <source>
    </source>
</evidence>
<evidence type="ECO:0000269" key="10">
    <source>
    </source>
</evidence>
<evidence type="ECO:0000269" key="11">
    <source>
    </source>
</evidence>
<evidence type="ECO:0000269" key="12">
    <source>
    </source>
</evidence>
<evidence type="ECO:0000269" key="13">
    <source>
    </source>
</evidence>
<evidence type="ECO:0000269" key="14">
    <source>
    </source>
</evidence>
<evidence type="ECO:0000269" key="15">
    <source>
    </source>
</evidence>
<evidence type="ECO:0000303" key="16">
    <source>
    </source>
</evidence>
<evidence type="ECO:0000303" key="17">
    <source>
    </source>
</evidence>
<evidence type="ECO:0000303" key="18">
    <source>
    </source>
</evidence>
<evidence type="ECO:0000305" key="19"/>
<evidence type="ECO:0000305" key="20">
    <source>
    </source>
</evidence>
<evidence type="ECO:0000312" key="21">
    <source>
        <dbReference type="HGNC" id="HGNC:23097"/>
    </source>
</evidence>
<comment type="function">
    <text evidence="1 4 6 7 8 9 11 12 13 15">Electrogenic voltage-dependent transporter that mediates the transport of a variety of endogenous bioactive amines, cationic xenobiotics and drugs (PubMed:15448143, PubMed:16099839, PubMed:16873718, PubMed:17018840, PubMed:17121826, PubMed:20592246, PubMed:20858707, PubMed:22396231, PubMed:31537831). Utilizes the physiologic inside-negative membrane potential as a driving force to facilitate cellular uptake of organic cations (PubMed:15448143, PubMed:20592246, PubMed:22396231). Functions as a Na(+)- and Cl(-)-independent bidirectional transporter (PubMed:15448143, PubMed:16099839, PubMed:22396231, PubMed:31537831). Substrate transport is pH-dependent and enhanced under acidic condition, which is most likely the result of allosteric changes in the transporter structure (PubMed:16873718, PubMed:17018840, PubMed:20592246, PubMed:22396231, PubMed:31537831). Implicated in monoamine neurotransmitters uptake such as serotonin, dopamine, adrenaline/epinephrine, noradrenaline/norepinephrine, histamine and tyramine, thereby supporting a role in homeostatic regulation of aminergic neurotransmission in the central nervous system (PubMed:15448143, PubMed:16099839, PubMed:17018840, PubMed:17121826, PubMed:20858707, PubMed:22396231). Also responsible for the uptake of bioactive amines and drugs through the blood-cerebrospinal fluid (CSF) barrier, from the CSF into choroid plexus epithelial cells, thereby playing a significant role in the clearance of cationic neurotoxins, xenobiotics and metabolic waste in the brain (By similarity). Involved in bidirectional transport of the purine nucleoside adenosine and plays a role in the regulation of extracellular adenosine concentrations in cardiac tissues, in particular during ischemia (PubMed:16873718, PubMed:20592246, PubMed:31537831). May be involved in organic cation uptake from the tubular lumen into renal tubular cells, thereby contributing to organic cation reabsorption in the kidney (PubMed:17018840). Also transports guanidine (PubMed:16099839).</text>
</comment>
<comment type="catalytic activity">
    <reaction evidence="4 9 11 12">
        <text>serotonin(out) = serotonin(in)</text>
        <dbReference type="Rhea" id="RHEA:73867"/>
        <dbReference type="ChEBI" id="CHEBI:350546"/>
    </reaction>
</comment>
<comment type="catalytic activity">
    <reaction evidence="4 9 12">
        <text>dopamine(out) = dopamine(in)</text>
        <dbReference type="Rhea" id="RHEA:73863"/>
        <dbReference type="ChEBI" id="CHEBI:59905"/>
    </reaction>
</comment>
<comment type="catalytic activity">
    <reaction evidence="4 12">
        <text>(R)-noradrenaline(out) = (R)-noradrenaline(in)</text>
        <dbReference type="Rhea" id="RHEA:73871"/>
        <dbReference type="ChEBI" id="CHEBI:72587"/>
    </reaction>
</comment>
<comment type="catalytic activity">
    <reaction evidence="4 12">
        <text>(R)-adrenaline(out) = (R)-adrenaline(in)</text>
        <dbReference type="Rhea" id="RHEA:73875"/>
        <dbReference type="ChEBI" id="CHEBI:71406"/>
    </reaction>
</comment>
<comment type="catalytic activity">
    <reaction evidence="6 8 12 13">
        <text>histamine(out) = histamine(in)</text>
        <dbReference type="Rhea" id="RHEA:73879"/>
        <dbReference type="ChEBI" id="CHEBI:58432"/>
    </reaction>
</comment>
<comment type="catalytic activity">
    <reaction evidence="6">
        <text>tyramine(in) = tyramine(out)</text>
        <dbReference type="Rhea" id="RHEA:74783"/>
        <dbReference type="ChEBI" id="CHEBI:327995"/>
    </reaction>
</comment>
<comment type="catalytic activity">
    <reaction evidence="6">
        <text>guanidine(out) = guanidine(in)</text>
        <dbReference type="Rhea" id="RHEA:73883"/>
        <dbReference type="ChEBI" id="CHEBI:30087"/>
    </reaction>
</comment>
<comment type="catalytic activity">
    <reaction evidence="7 11 15">
        <text>adenosine(in) = adenosine(out)</text>
        <dbReference type="Rhea" id="RHEA:75343"/>
        <dbReference type="ChEBI" id="CHEBI:16335"/>
    </reaction>
    <physiologicalReaction direction="left-to-right" evidence="20">
        <dbReference type="Rhea" id="RHEA:75344"/>
    </physiologicalReaction>
    <physiologicalReaction direction="right-to-left" evidence="20">
        <dbReference type="Rhea" id="RHEA:75345"/>
    </physiologicalReaction>
</comment>
<comment type="activity regulation">
    <text evidence="7 8 11 13 15">Activated at acidic pH.</text>
</comment>
<comment type="biophysicochemical properties">
    <kinetics>
        <KM evidence="4">114 uM for serotonin (at pH 7.4)</KM>
        <KM evidence="12">283 uM for serotonin (at pH 7.4)</KM>
        <KM evidence="7">1900 uM for serotonin (at pH 5.5)</KM>
        <KM evidence="6">283 uM for tyramine (at pH 7.4)</KM>
        <KM evidence="4">329 uM for dopamine (at pH 7.4)</KM>
        <KM evidence="12">406 uM for dopamine (at pH 7.4)</KM>
        <KM evidence="4">15323 uM for adrenaline (at pH 7.4)</KM>
        <KM evidence="12">951 uM for adrenaline (at pH 7.4)</KM>
        <KM evidence="12">1078 uM for noradrenaline (at pH 7.4)</KM>
        <KM evidence="4">2606 uM for noradrenaline (at pH 7.4)</KM>
        <KM evidence="6">10471 uM for histamine (at pH 7.4)</KM>
        <KM evidence="12">4379 uM for histamine (at pH 7.4)</KM>
        <KM evidence="4">15323 uM for histamine (at pH 7.4)</KM>
        <KM evidence="11">413 uM for adenosine (at pH 7.4)</KM>
        <KM evidence="7">780 uM for adenosine (at pH 5.5)</KM>
        <Vmax evidence="11">2.01 nmol/min/mg enzyme for adenosine uptake (at pH 7.4)</Vmax>
        <Vmax evidence="12">14.19 nmol/min/mg enzyme for serotonin uptake (at pH 7.4)</Vmax>
        <Vmax evidence="4">6.5 nmol/min/mg enzyme for serotonin uptake (at pH 7.4)</Vmax>
        <Vmax evidence="6">5.05 nmol/min/mg enzyme for tyramine uptake (at pH 7.4)</Vmax>
        <Vmax evidence="12">22.4 nmol/min/mg enzyme for dopamine uptake (at pH 7.4)</Vmax>
        <Vmax evidence="4">18.2 nmol/min/mg enzyme for dopamine uptake (at pH 7.4)</Vmax>
        <Vmax evidence="4">38.4 nmol/min/mg enzyme for adrenaline uptake (at pH 7.4)</Vmax>
        <Vmax evidence="12">7.25 nmol/min/mg enzyme for adrenaline uptake (at pH 7.4)</Vmax>
        <Vmax evidence="4">20.6 nmol/min/mg enzyme for noradrenaline uptake (at pH 7.4)</Vmax>
        <Vmax evidence="12">8.82 nmol/min/mg enzyme for noradrenaline uptake (at pH 7.4)</Vmax>
        <Vmax evidence="6">99.61 nmol/min/mg enzyme for histamine uptake (at pH 7.4)</Vmax>
        <Vmax evidence="12">42.37 nmol/min/mg enzyme for histamine uptake (at pH 7.4)</Vmax>
    </kinetics>
    <phDependence>
        <text evidence="7 11 13 15">Optimum pH is 6.0 for histamine uptake (PubMed:22396231). Optimum pH is 6.6 for adenosine, serotonin and inosine uptake (PubMed:20592246). Optimum pH is 6.0 for adenosine uptake (PubMed:16873718, PubMed:31537831). Does not transport adenosine at pH 7.4 (PubMed:16873718).</text>
    </phDependence>
</comment>
<comment type="subcellular location">
    <subcellularLocation>
        <location evidence="4 7 9 12">Cell membrane</location>
        <topology evidence="19">Multi-pass membrane protein</topology>
    </subcellularLocation>
    <subcellularLocation>
        <location evidence="8 14">Apical cell membrane</location>
        <topology evidence="19">Multi-pass membrane protein</topology>
    </subcellularLocation>
    <text evidence="7 8 14">Located to the plasma membranes of ventricular myocytes and vascular endothelial cells (PubMed:16873718). Targeted to the apical membranes of differentiated kidney epithelial cells (PubMed:17018840). Localized to the apical blood-cerebrospinal fluid (CSF)-facing membrane of the choroid plexus epithelium (PubMed:23255610).</text>
</comment>
<comment type="alternative products">
    <event type="alternative splicing"/>
    <isoform>
        <id>Q7RTT9-1</id>
        <name>1</name>
        <sequence type="displayed"/>
    </isoform>
    <isoform>
        <id>Q7RTT9-2</id>
        <name>2</name>
        <sequence type="described" ref="VSP_032647"/>
    </isoform>
</comment>
<comment type="tissue specificity">
    <text evidence="4 7 8 10 11 12 14">Mainly expressed in brain and skeletal muscle (PubMed:15448143, PubMed:16873718, PubMed:20592246, PubMed:20858707). In brain, expressed in cerebellum, cerebral cortex, medulla oblongata, occipital pole, frontal and temporal lobes putamen, spinal cord, substancia nigra, hippocampus, caudate nucleus, nucleus accumbens, pons and choroid plexus (PubMed:15448143, PubMed:16873718, PubMed:20858707, PubMed:23255610). Expressed in heart, in both cardiomyocytes and vascular endothelial cells (PubMed:15448143, PubMed:16873718, PubMed:20858707). Also expressed in adrenal gland, small intestine, pancreas, kidney, liver, bone marrow, lymph node (PubMed:15448143, PubMed:16873718, PubMed:17018840, PubMed:20858707). Located in endometrial stroma, where the expression is high in the proliferative phase, decreases during the secretory phase, and is no longer detectable in the menstrual phase (PubMed:17393420).</text>
</comment>
<comment type="domain">
    <text evidence="7">Glu-206 is essential for cation selectivity and may function as the charge sensor for cationic substrates.</text>
</comment>
<comment type="PTM">
    <text evidence="7">N-glycosylated.</text>
</comment>
<comment type="miscellaneous">
    <text evidence="4 6 8 9 10 11 12 14">Does not interact with nucleosides, nucleobases or nucleotides, other than a moderate activity for adenosine (PubMed:15448143, PubMed:17393420, PubMed:20592246). Mediates the uptake of neurotoxin 1-methyl-4-phenylpyridinium (MPP(+)) (PubMed:15448143, PubMed:16099839, PubMed:17018840, PubMed:17121826, PubMed:20592246, PubMed:20858707, PubMed:23255610).</text>
</comment>
<comment type="similarity">
    <text evidence="19">Belongs to the SLC29A/ENT transporter (TC 2.A.57) family.</text>
</comment>
<comment type="caution">
    <text evidence="7">Unlike mouse protein, not able to transport adenine nucleotide in acidic condition.</text>
</comment>
<comment type="sequence caution" evidence="19">
    <conflict type="erroneous initiation">
        <sequence resource="EMBL-CDS" id="BAC11612"/>
    </conflict>
</comment>
<reference key="1">
    <citation type="journal article" date="2004" name="J. Biol. Chem.">
        <title>Identification and characterization of a novel monoamine transporter in the human brain.</title>
        <authorList>
            <person name="Engel K."/>
            <person name="Zhou M."/>
            <person name="Wang J."/>
        </authorList>
    </citation>
    <scope>NUCLEOTIDE SEQUENCE [MRNA] (ISOFORM 1)</scope>
    <scope>FUNCTION</scope>
    <scope>TRANSPORTER ACTIVITY</scope>
    <scope>BIOPHYSICOCHEMICAL PROPERTIES</scope>
    <scope>SUBCELLULAR LOCATION</scope>
    <scope>TOPOLOGY</scope>
    <scope>TISSUE SPECIFICITY</scope>
    <scope>MISCELLANEOUS</scope>
    <source>
        <tissue>Kidney</tissue>
    </source>
</reference>
<reference key="2">
    <citation type="journal article" date="2004" name="Nat. Genet.">
        <title>Complete sequencing and characterization of 21,243 full-length human cDNAs.</title>
        <authorList>
            <person name="Ota T."/>
            <person name="Suzuki Y."/>
            <person name="Nishikawa T."/>
            <person name="Otsuki T."/>
            <person name="Sugiyama T."/>
            <person name="Irie R."/>
            <person name="Wakamatsu A."/>
            <person name="Hayashi K."/>
            <person name="Sato H."/>
            <person name="Nagai K."/>
            <person name="Kimura K."/>
            <person name="Makita H."/>
            <person name="Sekine M."/>
            <person name="Obayashi M."/>
            <person name="Nishi T."/>
            <person name="Shibahara T."/>
            <person name="Tanaka T."/>
            <person name="Ishii S."/>
            <person name="Yamamoto J."/>
            <person name="Saito K."/>
            <person name="Kawai Y."/>
            <person name="Isono Y."/>
            <person name="Nakamura Y."/>
            <person name="Nagahari K."/>
            <person name="Murakami K."/>
            <person name="Yasuda T."/>
            <person name="Iwayanagi T."/>
            <person name="Wagatsuma M."/>
            <person name="Shiratori A."/>
            <person name="Sudo H."/>
            <person name="Hosoiri T."/>
            <person name="Kaku Y."/>
            <person name="Kodaira H."/>
            <person name="Kondo H."/>
            <person name="Sugawara M."/>
            <person name="Takahashi M."/>
            <person name="Kanda K."/>
            <person name="Yokoi T."/>
            <person name="Furuya T."/>
            <person name="Kikkawa E."/>
            <person name="Omura Y."/>
            <person name="Abe K."/>
            <person name="Kamihara K."/>
            <person name="Katsuta N."/>
            <person name="Sato K."/>
            <person name="Tanikawa M."/>
            <person name="Yamazaki M."/>
            <person name="Ninomiya K."/>
            <person name="Ishibashi T."/>
            <person name="Yamashita H."/>
            <person name="Murakawa K."/>
            <person name="Fujimori K."/>
            <person name="Tanai H."/>
            <person name="Kimata M."/>
            <person name="Watanabe M."/>
            <person name="Hiraoka S."/>
            <person name="Chiba Y."/>
            <person name="Ishida S."/>
            <person name="Ono Y."/>
            <person name="Takiguchi S."/>
            <person name="Watanabe S."/>
            <person name="Yosida M."/>
            <person name="Hotuta T."/>
            <person name="Kusano J."/>
            <person name="Kanehori K."/>
            <person name="Takahashi-Fujii A."/>
            <person name="Hara H."/>
            <person name="Tanase T.-O."/>
            <person name="Nomura Y."/>
            <person name="Togiya S."/>
            <person name="Komai F."/>
            <person name="Hara R."/>
            <person name="Takeuchi K."/>
            <person name="Arita M."/>
            <person name="Imose N."/>
            <person name="Musashino K."/>
            <person name="Yuuki H."/>
            <person name="Oshima A."/>
            <person name="Sasaki N."/>
            <person name="Aotsuka S."/>
            <person name="Yoshikawa Y."/>
            <person name="Matsunawa H."/>
            <person name="Ichihara T."/>
            <person name="Shiohata N."/>
            <person name="Sano S."/>
            <person name="Moriya S."/>
            <person name="Momiyama H."/>
            <person name="Satoh N."/>
            <person name="Takami S."/>
            <person name="Terashima Y."/>
            <person name="Suzuki O."/>
            <person name="Nakagawa S."/>
            <person name="Senoh A."/>
            <person name="Mizoguchi H."/>
            <person name="Goto Y."/>
            <person name="Shimizu F."/>
            <person name="Wakebe H."/>
            <person name="Hishigaki H."/>
            <person name="Watanabe T."/>
            <person name="Sugiyama A."/>
            <person name="Takemoto M."/>
            <person name="Kawakami B."/>
            <person name="Yamazaki M."/>
            <person name="Watanabe K."/>
            <person name="Kumagai A."/>
            <person name="Itakura S."/>
            <person name="Fukuzumi Y."/>
            <person name="Fujimori Y."/>
            <person name="Komiyama M."/>
            <person name="Tashiro H."/>
            <person name="Tanigami A."/>
            <person name="Fujiwara T."/>
            <person name="Ono T."/>
            <person name="Yamada K."/>
            <person name="Fujii Y."/>
            <person name="Ozaki K."/>
            <person name="Hirao M."/>
            <person name="Ohmori Y."/>
            <person name="Kawabata A."/>
            <person name="Hikiji T."/>
            <person name="Kobatake N."/>
            <person name="Inagaki H."/>
            <person name="Ikema Y."/>
            <person name="Okamoto S."/>
            <person name="Okitani R."/>
            <person name="Kawakami T."/>
            <person name="Noguchi S."/>
            <person name="Itoh T."/>
            <person name="Shigeta K."/>
            <person name="Senba T."/>
            <person name="Matsumura K."/>
            <person name="Nakajima Y."/>
            <person name="Mizuno T."/>
            <person name="Morinaga M."/>
            <person name="Sasaki M."/>
            <person name="Togashi T."/>
            <person name="Oyama M."/>
            <person name="Hata H."/>
            <person name="Watanabe M."/>
            <person name="Komatsu T."/>
            <person name="Mizushima-Sugano J."/>
            <person name="Satoh T."/>
            <person name="Shirai Y."/>
            <person name="Takahashi Y."/>
            <person name="Nakagawa K."/>
            <person name="Okumura K."/>
            <person name="Nagase T."/>
            <person name="Nomura N."/>
            <person name="Kikuchi H."/>
            <person name="Masuho Y."/>
            <person name="Yamashita R."/>
            <person name="Nakai K."/>
            <person name="Yada T."/>
            <person name="Nakamura Y."/>
            <person name="Ohara O."/>
            <person name="Isogai T."/>
            <person name="Sugano S."/>
        </authorList>
    </citation>
    <scope>NUCLEOTIDE SEQUENCE [LARGE SCALE MRNA] (ISOFORM 1)</scope>
    <source>
        <tissue>Teratocarcinoma</tissue>
    </source>
</reference>
<reference key="3">
    <citation type="submission" date="2005-07" db="EMBL/GenBank/DDBJ databases">
        <authorList>
            <person name="Mural R.J."/>
            <person name="Istrail S."/>
            <person name="Sutton G.G."/>
            <person name="Florea L."/>
            <person name="Halpern A.L."/>
            <person name="Mobarry C.M."/>
            <person name="Lippert R."/>
            <person name="Walenz B."/>
            <person name="Shatkay H."/>
            <person name="Dew I."/>
            <person name="Miller J.R."/>
            <person name="Flanigan M.J."/>
            <person name="Edwards N.J."/>
            <person name="Bolanos R."/>
            <person name="Fasulo D."/>
            <person name="Halldorsson B.V."/>
            <person name="Hannenhalli S."/>
            <person name="Turner R."/>
            <person name="Yooseph S."/>
            <person name="Lu F."/>
            <person name="Nusskern D.R."/>
            <person name="Shue B.C."/>
            <person name="Zheng X.H."/>
            <person name="Zhong F."/>
            <person name="Delcher A.L."/>
            <person name="Huson D.H."/>
            <person name="Kravitz S.A."/>
            <person name="Mouchard L."/>
            <person name="Reinert K."/>
            <person name="Remington K.A."/>
            <person name="Clark A.G."/>
            <person name="Waterman M.S."/>
            <person name="Eichler E.E."/>
            <person name="Adams M.D."/>
            <person name="Hunkapiller M.W."/>
            <person name="Myers E.W."/>
            <person name="Venter J.C."/>
        </authorList>
    </citation>
    <scope>NUCLEOTIDE SEQUENCE [LARGE SCALE GENOMIC DNA]</scope>
</reference>
<reference key="4">
    <citation type="journal article" date="2004" name="Genome Res.">
        <title>The status, quality, and expansion of the NIH full-length cDNA project: the Mammalian Gene Collection (MGC).</title>
        <authorList>
            <consortium name="The MGC Project Team"/>
        </authorList>
    </citation>
    <scope>NUCLEOTIDE SEQUENCE [LARGE SCALE MRNA] (ISOFORMS 1 AND 2)</scope>
    <scope>VARIANTS GLU-79; LYS-124 AND THR-429</scope>
    <source>
        <tissue>Brain</tissue>
        <tissue>Eye</tissue>
    </source>
</reference>
<reference key="5">
    <citation type="journal article" date="2002" name="Mol. Biol. Evol.">
        <title>Molecular evolution of the equilibrative nucleoside transporter family: identification of novel family members in prokaryotes and eukaryotes.</title>
        <authorList>
            <person name="Acimovic Y."/>
            <person name="Coe I.R."/>
        </authorList>
    </citation>
    <scope>IDENTIFICATION</scope>
</reference>
<reference key="6">
    <citation type="journal article" date="2005" name="Mol. Pharmacol.">
        <title>Interaction of organic cations with a newly identified plasma membrane monoamine transporter.</title>
        <authorList>
            <person name="Engel K."/>
            <person name="Wang J."/>
        </authorList>
    </citation>
    <scope>FUNCTION</scope>
    <scope>TRANSPORTER ACTIVITY</scope>
    <scope>BIOPHYSICOCHEMICAL PROPERTIES</scope>
    <scope>MISCEALENOUS</scope>
</reference>
<reference key="7">
    <citation type="journal article" date="2006" name="Circ. Res.">
        <title>Distribution and functional characterization of equilibrative nucleoside transporter-4, a novel cardiac adenosine transporter activated at acidic pH.</title>
        <authorList>
            <person name="Barnes K."/>
            <person name="Dobrzynski H."/>
            <person name="Foppolo S."/>
            <person name="Beal P.R."/>
            <person name="Ismat F."/>
            <person name="Scullion E.R."/>
            <person name="Sun L."/>
            <person name="Tellez J."/>
            <person name="Ritzel M.W."/>
            <person name="Claycomb W.C."/>
            <person name="Cass C.E."/>
            <person name="Young J.D."/>
            <person name="Billeter-Clark R."/>
            <person name="Boyett M.R."/>
            <person name="Baldwin S.A."/>
        </authorList>
    </citation>
    <scope>FUNCTION</scope>
    <scope>TRANSPORTER ACTIVITY</scope>
    <scope>BIOPHYSICOCHEMICAL PROPERTIES</scope>
    <scope>ACTIVITY REGULATION</scope>
    <scope>SUBCELLULAR LOCATION</scope>
    <scope>TISSUE SPECIFICITY</scope>
    <scope>DOMAIN</scope>
    <scope>GLYCOSYLATION AT ASN-523</scope>
    <scope>MUTAGENESIS OF GLU-206 AND GLU-375</scope>
</reference>
<reference key="8">
    <citation type="journal article" date="2007" name="Am. J. Physiol.">
        <title>Membrane localization and pH-dependent transport of a newly cloned organic cation transporter (PMAT) in kidney cells.</title>
        <authorList>
            <person name="Xia L."/>
            <person name="Engel K."/>
            <person name="Zhou M."/>
            <person name="Wang J."/>
        </authorList>
    </citation>
    <scope>FUNCTION</scope>
    <scope>TRANSPORTER ACTIVITY</scope>
    <scope>TOPOLOGY</scope>
    <scope>ACTIVITY REGULATION</scope>
    <scope>TISSUE SPECIFICITY</scope>
    <scope>SUBCELLULAR LOCATION</scope>
</reference>
<reference key="9">
    <citation type="journal article" date="2007" name="J. Biol. Chem.">
        <title>Molecular determinants of substrate selectivity of a novel organic cation transporter (PMAT) in the SLC29 family.</title>
        <authorList>
            <person name="Zhou M."/>
            <person name="Xia L."/>
            <person name="Engel K."/>
            <person name="Wang J."/>
        </authorList>
    </citation>
    <scope>FUNCTION</scope>
    <scope>TRANSPORTER ACTIVITY</scope>
    <scope>SUBCELLULAR LOCATION</scope>
    <scope>MUTAGENESIS OF ASP-91; ASP-107; GLU-128; ASP-154; ASP-163; GLU-206; THR-220; GLU-227; GLU-242; TRP-336 AND GLU-375</scope>
    <scope>MISCELLANEOUS</scope>
</reference>
<reference key="10">
    <citation type="journal article" date="2007" name="Mol. Reprod. Dev.">
        <title>The organic cation transporters (OCT1, OCT2, EMT) and the plasma membrane monoamine transporter (PMAT) show differential distribution and cyclic expression pattern in human endometrium and early pregnancy decidua.</title>
        <authorList>
            <person name="Bottalico B."/>
            <person name="Noskova V."/>
            <person name="Pilka R."/>
            <person name="Larsson I."/>
            <person name="Domanski H."/>
            <person name="Casslen B."/>
            <person name="Hansson S.R."/>
        </authorList>
    </citation>
    <scope>TISSUE SPECIFICITY</scope>
    <scope>MISCELLANEOUS</scope>
</reference>
<reference key="11">
    <citation type="journal article" date="2010" name="Drug Metab. Dispos.">
        <title>Adenosine transport by plasma membrane monoamine transporter: reinvestigation and comparison with organic cations.</title>
        <authorList>
            <person name="Zhou M."/>
            <person name="Duan H."/>
            <person name="Engel K."/>
            <person name="Xia L."/>
            <person name="Wang J."/>
        </authorList>
    </citation>
    <scope>FUNCTION</scope>
    <scope>TRANSPORTER ACTIVITY</scope>
    <scope>BIOPHYSICOCHEMICAL PROPERTIES</scope>
    <scope>ACTIVITY REGULATION</scope>
    <scope>TISSUE SPECIFICITY</scope>
    <scope>MISCELLANEOUS</scope>
</reference>
<reference key="12">
    <citation type="journal article" date="2010" name="J. Pharmacol. Exp. Ther.">
        <title>Selective transport of monoamine neurotransmitters by human plasma membrane monoamine transporter and organic cation transporter 3.</title>
        <authorList>
            <person name="Duan H."/>
            <person name="Wang J."/>
        </authorList>
    </citation>
    <scope>FUNCTION</scope>
    <scope>TRANSPORTER ACTIVITY</scope>
    <scope>BIOPHYSICOCHEMICAL PROPERTIES</scope>
    <scope>SUBCELLULAR LOCATION</scope>
    <scope>TISSUE SPECIFICITY</scope>
    <scope>MISCELLANEOUS</scope>
</reference>
<reference key="13">
    <citation type="journal article" date="2012" name="Drug Metab. Dispos.">
        <title>Electrophysiological characterization of the polyspecific organic cation transporter plasma membrane monoamine transporter.</title>
        <authorList>
            <person name="Itagaki S."/>
            <person name="Ganapathy V."/>
            <person name="Ho H.T."/>
            <person name="Zhou M."/>
            <person name="Babu E."/>
            <person name="Wang J."/>
        </authorList>
    </citation>
    <scope>FUNCTION</scope>
    <scope>TRANSPORTER ACTIVITY</scope>
    <scope>BIOPHYSICOCHEMICAL PROPERTIES</scope>
    <scope>ACTIVITY REGULATION</scope>
</reference>
<reference key="14">
    <citation type="journal article" date="2013" name="J. Biol. Chem.">
        <title>Impaired monoamine and organic cation uptake in choroid plexus in mice with targeted disruption of the plasma membrane monoamine transporter (Slc29a4) gene.</title>
        <authorList>
            <person name="Duan H."/>
            <person name="Wang J."/>
        </authorList>
    </citation>
    <scope>TISSUE SPECIFICITY</scope>
    <scope>SUBCELLULAR LOCATION</scope>
    <scope>MISCELLANEOUS</scope>
</reference>
<reference key="15">
    <citation type="journal article" date="2019" name="Sci. Rep.">
        <title>Bidirectional transport of 2-chloroadenosine by equilibrative nucleoside transporter 4 (hENT4): Evidence for allosteric kinetics at acidic pH.</title>
        <authorList>
            <person name="Tandio D."/>
            <person name="Vilas G."/>
            <person name="Hammond J.R."/>
        </authorList>
    </citation>
    <scope>FUNCTION</scope>
    <scope>TRANSPORTER ACTIVITY</scope>
    <scope>BIOPHYSICOCHEMICAL PROPERTIES</scope>
    <scope>ACTIVITY REGULATION</scope>
</reference>
<dbReference type="EMBL" id="AY485959">
    <property type="protein sequence ID" value="AAS65965.1"/>
    <property type="molecule type" value="mRNA"/>
</dbReference>
<dbReference type="EMBL" id="AK075422">
    <property type="protein sequence ID" value="BAC11612.1"/>
    <property type="status" value="ALT_INIT"/>
    <property type="molecule type" value="mRNA"/>
</dbReference>
<dbReference type="EMBL" id="AK092242">
    <property type="protein sequence ID" value="BAC03836.1"/>
    <property type="molecule type" value="mRNA"/>
</dbReference>
<dbReference type="EMBL" id="CH471144">
    <property type="protein sequence ID" value="EAW87329.1"/>
    <property type="molecule type" value="Genomic_DNA"/>
</dbReference>
<dbReference type="EMBL" id="CH471144">
    <property type="protein sequence ID" value="EAW87330.1"/>
    <property type="molecule type" value="Genomic_DNA"/>
</dbReference>
<dbReference type="EMBL" id="BC025325">
    <property type="protein sequence ID" value="AAH25325.1"/>
    <property type="molecule type" value="mRNA"/>
</dbReference>
<dbReference type="EMBL" id="BC047592">
    <property type="protein sequence ID" value="AAH47592.1"/>
    <property type="molecule type" value="mRNA"/>
</dbReference>
<dbReference type="EMBL" id="BK000627">
    <property type="protein sequence ID" value="DAA00308.1"/>
    <property type="molecule type" value="Genomic_DNA"/>
</dbReference>
<dbReference type="CCDS" id="CCDS5340.1">
    <molecule id="Q7RTT9-1"/>
</dbReference>
<dbReference type="CCDS" id="CCDS75561.1">
    <molecule id="Q7RTT9-2"/>
</dbReference>
<dbReference type="RefSeq" id="NP_001035751.1">
    <molecule id="Q7RTT9-1"/>
    <property type="nucleotide sequence ID" value="NM_001040661.3"/>
</dbReference>
<dbReference type="RefSeq" id="NP_001287776.1">
    <molecule id="Q7RTT9-2"/>
    <property type="nucleotide sequence ID" value="NM_001300847.3"/>
</dbReference>
<dbReference type="RefSeq" id="NP_694979.2">
    <molecule id="Q7RTT9-1"/>
    <property type="nucleotide sequence ID" value="NM_153247.4"/>
</dbReference>
<dbReference type="RefSeq" id="XP_005249715.1">
    <property type="nucleotide sequence ID" value="XM_005249658.4"/>
</dbReference>
<dbReference type="RefSeq" id="XP_006715730.1">
    <property type="nucleotide sequence ID" value="XM_006715667.3"/>
</dbReference>
<dbReference type="RefSeq" id="XP_011513502.1">
    <property type="nucleotide sequence ID" value="XM_011515200.2"/>
</dbReference>
<dbReference type="RefSeq" id="XP_011513503.1">
    <property type="nucleotide sequence ID" value="XM_011515201.2"/>
</dbReference>
<dbReference type="SMR" id="Q7RTT9"/>
<dbReference type="BioGRID" id="128822">
    <property type="interactions" value="3"/>
</dbReference>
<dbReference type="FunCoup" id="Q7RTT9">
    <property type="interactions" value="227"/>
</dbReference>
<dbReference type="IntAct" id="Q7RTT9">
    <property type="interactions" value="2"/>
</dbReference>
<dbReference type="STRING" id="9606.ENSP00000380081"/>
<dbReference type="ChEMBL" id="CHEMBL3509593"/>
<dbReference type="DrugBank" id="DB00640">
    <property type="generic name" value="Adenosine"/>
</dbReference>
<dbReference type="DrugBank" id="DB00331">
    <property type="generic name" value="Metformin"/>
</dbReference>
<dbReference type="DrugBank" id="DB01104">
    <property type="generic name" value="Sertraline"/>
</dbReference>
<dbReference type="DrugCentral" id="Q7RTT9"/>
<dbReference type="GuidetoPHARMACOLOGY" id="1120"/>
<dbReference type="TCDB" id="2.A.57.1.5">
    <property type="family name" value="the equilibrative nucleoside transporter (ent) family"/>
</dbReference>
<dbReference type="GlyCosmos" id="Q7RTT9">
    <property type="glycosylation" value="1 site, No reported glycans"/>
</dbReference>
<dbReference type="GlyGen" id="Q7RTT9">
    <property type="glycosylation" value="1 site, 1 N-linked glycan (1 site)"/>
</dbReference>
<dbReference type="iPTMnet" id="Q7RTT9"/>
<dbReference type="PhosphoSitePlus" id="Q7RTT9"/>
<dbReference type="BioMuta" id="SLC29A4"/>
<dbReference type="DMDM" id="74713147"/>
<dbReference type="MassIVE" id="Q7RTT9"/>
<dbReference type="PaxDb" id="9606-ENSP00000380081"/>
<dbReference type="PeptideAtlas" id="Q7RTT9"/>
<dbReference type="ProteomicsDB" id="68902">
    <molecule id="Q7RTT9-1"/>
</dbReference>
<dbReference type="ProteomicsDB" id="68903">
    <molecule id="Q7RTT9-2"/>
</dbReference>
<dbReference type="Antibodypedia" id="24590">
    <property type="antibodies" value="251 antibodies from 26 providers"/>
</dbReference>
<dbReference type="DNASU" id="222962"/>
<dbReference type="Ensembl" id="ENST00000297195.8">
    <molecule id="Q7RTT9-1"/>
    <property type="protein sequence ID" value="ENSP00000297195.4"/>
    <property type="gene ID" value="ENSG00000164638.11"/>
</dbReference>
<dbReference type="Ensembl" id="ENST00000396872.8">
    <molecule id="Q7RTT9-1"/>
    <property type="protein sequence ID" value="ENSP00000380081.2"/>
    <property type="gene ID" value="ENSG00000164638.11"/>
</dbReference>
<dbReference type="Ensembl" id="ENST00000406453.3">
    <molecule id="Q7RTT9-2"/>
    <property type="protein sequence ID" value="ENSP00000385845.3"/>
    <property type="gene ID" value="ENSG00000164638.11"/>
</dbReference>
<dbReference type="GeneID" id="222962"/>
<dbReference type="KEGG" id="hsa:222962"/>
<dbReference type="MANE-Select" id="ENST00000396872.8">
    <property type="protein sequence ID" value="ENSP00000380081.2"/>
    <property type="RefSeq nucleotide sequence ID" value="NM_153247.4"/>
    <property type="RefSeq protein sequence ID" value="NP_694979.2"/>
</dbReference>
<dbReference type="UCSC" id="uc003soc.4">
    <molecule id="Q7RTT9-1"/>
    <property type="organism name" value="human"/>
</dbReference>
<dbReference type="AGR" id="HGNC:23097"/>
<dbReference type="CTD" id="222962"/>
<dbReference type="DisGeNET" id="222962"/>
<dbReference type="GeneCards" id="SLC29A4"/>
<dbReference type="HGNC" id="HGNC:23097">
    <property type="gene designation" value="SLC29A4"/>
</dbReference>
<dbReference type="HPA" id="ENSG00000164638">
    <property type="expression patterns" value="Tissue enhanced (adipose tissue, brain, choroid plexus)"/>
</dbReference>
<dbReference type="MalaCards" id="SLC29A4"/>
<dbReference type="MIM" id="609149">
    <property type="type" value="gene"/>
</dbReference>
<dbReference type="neXtProt" id="NX_Q7RTT9"/>
<dbReference type="OpenTargets" id="ENSG00000164638"/>
<dbReference type="PharmGKB" id="PA134976472"/>
<dbReference type="VEuPathDB" id="HostDB:ENSG00000164638"/>
<dbReference type="eggNOG" id="KOG1479">
    <property type="taxonomic scope" value="Eukaryota"/>
</dbReference>
<dbReference type="GeneTree" id="ENSGT00950000182898"/>
<dbReference type="HOGENOM" id="CLU_021611_4_0_1"/>
<dbReference type="InParanoid" id="Q7RTT9"/>
<dbReference type="OMA" id="ARGMNEF"/>
<dbReference type="OrthoDB" id="10014563at2759"/>
<dbReference type="PAN-GO" id="Q7RTT9">
    <property type="GO annotations" value="2 GO annotations based on evolutionary models"/>
</dbReference>
<dbReference type="PhylomeDB" id="Q7RTT9"/>
<dbReference type="TreeFam" id="TF313950"/>
<dbReference type="PathwayCommons" id="Q7RTT9"/>
<dbReference type="Reactome" id="R-HSA-83936">
    <property type="pathway name" value="Transport of nucleosides and free purine and pyrimidine bases across the plasma membrane"/>
</dbReference>
<dbReference type="SignaLink" id="Q7RTT9"/>
<dbReference type="SIGNOR" id="Q7RTT9"/>
<dbReference type="BioGRID-ORCS" id="222962">
    <property type="hits" value="32 hits in 1149 CRISPR screens"/>
</dbReference>
<dbReference type="ChiTaRS" id="SLC29A4">
    <property type="organism name" value="human"/>
</dbReference>
<dbReference type="GeneWiki" id="SLC29A4"/>
<dbReference type="GenomeRNAi" id="222962"/>
<dbReference type="Pharos" id="Q7RTT9">
    <property type="development level" value="Tchem"/>
</dbReference>
<dbReference type="PRO" id="PR:Q7RTT9"/>
<dbReference type="Proteomes" id="UP000005640">
    <property type="component" value="Chromosome 7"/>
</dbReference>
<dbReference type="RNAct" id="Q7RTT9">
    <property type="molecule type" value="protein"/>
</dbReference>
<dbReference type="Bgee" id="ENSG00000164638">
    <property type="expression patterns" value="Expressed in buccal mucosa cell and 132 other cell types or tissues"/>
</dbReference>
<dbReference type="ExpressionAtlas" id="Q7RTT9">
    <property type="expression patterns" value="baseline and differential"/>
</dbReference>
<dbReference type="GO" id="GO:0016324">
    <property type="term" value="C:apical plasma membrane"/>
    <property type="evidence" value="ECO:0000314"/>
    <property type="project" value="UniProtKB"/>
</dbReference>
<dbReference type="GO" id="GO:0016323">
    <property type="term" value="C:basolateral plasma membrane"/>
    <property type="evidence" value="ECO:0000314"/>
    <property type="project" value="ARUK-UCL"/>
</dbReference>
<dbReference type="GO" id="GO:0005886">
    <property type="term" value="C:plasma membrane"/>
    <property type="evidence" value="ECO:0000314"/>
    <property type="project" value="ARUK-UCL"/>
</dbReference>
<dbReference type="GO" id="GO:0098793">
    <property type="term" value="C:presynapse"/>
    <property type="evidence" value="ECO:0007669"/>
    <property type="project" value="GOC"/>
</dbReference>
<dbReference type="GO" id="GO:0015562">
    <property type="term" value="F:efflux transmembrane transporter activity"/>
    <property type="evidence" value="ECO:0000314"/>
    <property type="project" value="UniProtKB"/>
</dbReference>
<dbReference type="GO" id="GO:0008504">
    <property type="term" value="F:monoamine transmembrane transporter activity"/>
    <property type="evidence" value="ECO:0000314"/>
    <property type="project" value="UniProtKB"/>
</dbReference>
<dbReference type="GO" id="GO:0008324">
    <property type="term" value="F:monoatomic cation transmembrane transporter activity"/>
    <property type="evidence" value="ECO:0000250"/>
    <property type="project" value="ARUK-UCL"/>
</dbReference>
<dbReference type="GO" id="GO:0005326">
    <property type="term" value="F:neurotransmitter transmembrane transporter activity"/>
    <property type="evidence" value="ECO:0000314"/>
    <property type="project" value="UniProtKB"/>
</dbReference>
<dbReference type="GO" id="GO:0005337">
    <property type="term" value="F:nucleoside transmembrane transporter activity"/>
    <property type="evidence" value="ECO:0000304"/>
    <property type="project" value="Reactome"/>
</dbReference>
<dbReference type="GO" id="GO:0005342">
    <property type="term" value="F:organic acid transmembrane transporter activity"/>
    <property type="evidence" value="ECO:0000314"/>
    <property type="project" value="ARUK-UCL"/>
</dbReference>
<dbReference type="GO" id="GO:0015101">
    <property type="term" value="F:organic cation transmembrane transporter activity"/>
    <property type="evidence" value="ECO:0000314"/>
    <property type="project" value="UniProtKB"/>
</dbReference>
<dbReference type="GO" id="GO:0019534">
    <property type="term" value="F:toxin transmembrane transporter activity"/>
    <property type="evidence" value="ECO:0000250"/>
    <property type="project" value="ARUK-UCL"/>
</dbReference>
<dbReference type="GO" id="GO:0042910">
    <property type="term" value="F:xenobiotic transmembrane transporter activity"/>
    <property type="evidence" value="ECO:0000314"/>
    <property type="project" value="ARUK-UCL"/>
</dbReference>
<dbReference type="GO" id="GO:0032238">
    <property type="term" value="P:adenosine transport"/>
    <property type="evidence" value="ECO:0000314"/>
    <property type="project" value="UniProtKB"/>
</dbReference>
<dbReference type="GO" id="GO:1990748">
    <property type="term" value="P:cellular detoxification"/>
    <property type="evidence" value="ECO:0000250"/>
    <property type="project" value="ARUK-UCL"/>
</dbReference>
<dbReference type="GO" id="GO:0015872">
    <property type="term" value="P:dopamine transport"/>
    <property type="evidence" value="ECO:0000314"/>
    <property type="project" value="UniProtKB"/>
</dbReference>
<dbReference type="GO" id="GO:0090494">
    <property type="term" value="P:dopamine uptake"/>
    <property type="evidence" value="ECO:0000314"/>
    <property type="project" value="ARUK-UCL"/>
</dbReference>
<dbReference type="GO" id="GO:0048241">
    <property type="term" value="P:epinephrine transport"/>
    <property type="evidence" value="ECO:0000314"/>
    <property type="project" value="UniProtKB"/>
</dbReference>
<dbReference type="GO" id="GO:0051625">
    <property type="term" value="P:epinephrine uptake"/>
    <property type="evidence" value="ECO:0000314"/>
    <property type="project" value="ARUK-UCL"/>
</dbReference>
<dbReference type="GO" id="GO:0140115">
    <property type="term" value="P:export across plasma membrane"/>
    <property type="evidence" value="ECO:0000315"/>
    <property type="project" value="ARUK-UCL"/>
</dbReference>
<dbReference type="GO" id="GO:0001692">
    <property type="term" value="P:histamine metabolic process"/>
    <property type="evidence" value="ECO:0000304"/>
    <property type="project" value="ARUK-UCL"/>
</dbReference>
<dbReference type="GO" id="GO:0051608">
    <property type="term" value="P:histamine transport"/>
    <property type="evidence" value="ECO:0000314"/>
    <property type="project" value="UniProtKB"/>
</dbReference>
<dbReference type="GO" id="GO:0051615">
    <property type="term" value="P:histamine uptake"/>
    <property type="evidence" value="ECO:0000314"/>
    <property type="project" value="ARUK-UCL"/>
</dbReference>
<dbReference type="GO" id="GO:0015844">
    <property type="term" value="P:monoamine transport"/>
    <property type="evidence" value="ECO:0000315"/>
    <property type="project" value="ARUK-UCL"/>
</dbReference>
<dbReference type="GO" id="GO:0098655">
    <property type="term" value="P:monoatomic cation transmembrane transport"/>
    <property type="evidence" value="ECO:0000250"/>
    <property type="project" value="ARUK-UCL"/>
</dbReference>
<dbReference type="GO" id="GO:0006836">
    <property type="term" value="P:neurotransmitter transport"/>
    <property type="evidence" value="ECO:0000314"/>
    <property type="project" value="ARUK-UCL"/>
</dbReference>
<dbReference type="GO" id="GO:0015874">
    <property type="term" value="P:norepinephrine transport"/>
    <property type="evidence" value="ECO:0000314"/>
    <property type="project" value="UniProtKB"/>
</dbReference>
<dbReference type="GO" id="GO:0051620">
    <property type="term" value="P:norepinephrine uptake"/>
    <property type="evidence" value="ECO:0000314"/>
    <property type="project" value="ARUK-UCL"/>
</dbReference>
<dbReference type="GO" id="GO:1903825">
    <property type="term" value="P:organic acid transmembrane transport"/>
    <property type="evidence" value="ECO:0000314"/>
    <property type="project" value="ARUK-UCL"/>
</dbReference>
<dbReference type="GO" id="GO:0015695">
    <property type="term" value="P:organic cation transport"/>
    <property type="evidence" value="ECO:0000314"/>
    <property type="project" value="ARUK-UCL"/>
</dbReference>
<dbReference type="GO" id="GO:0006837">
    <property type="term" value="P:serotonin transport"/>
    <property type="evidence" value="ECO:0000314"/>
    <property type="project" value="UniProtKB"/>
</dbReference>
<dbReference type="GO" id="GO:0051610">
    <property type="term" value="P:serotonin uptake"/>
    <property type="evidence" value="ECO:0000314"/>
    <property type="project" value="ARUK-UCL"/>
</dbReference>
<dbReference type="GO" id="GO:0150104">
    <property type="term" value="P:transport across blood-brain barrier"/>
    <property type="evidence" value="ECO:0000303"/>
    <property type="project" value="ARUK-UCL"/>
</dbReference>
<dbReference type="GO" id="GO:0042908">
    <property type="term" value="P:xenobiotic transport"/>
    <property type="evidence" value="ECO:0000314"/>
    <property type="project" value="ARUK-UCL"/>
</dbReference>
<dbReference type="FunFam" id="1.20.1250.20:FF:000255">
    <property type="entry name" value="Solute carrier family 29 member 4"/>
    <property type="match status" value="1"/>
</dbReference>
<dbReference type="InterPro" id="IPR002259">
    <property type="entry name" value="Eqnu_transpt"/>
</dbReference>
<dbReference type="InterPro" id="IPR036259">
    <property type="entry name" value="MFS_trans_sf"/>
</dbReference>
<dbReference type="PANTHER" id="PTHR10332">
    <property type="entry name" value="EQUILIBRATIVE NUCLEOSIDE TRANSPORTER"/>
    <property type="match status" value="1"/>
</dbReference>
<dbReference type="PANTHER" id="PTHR10332:SF10">
    <property type="entry name" value="EQUILIBRATIVE NUCLEOSIDE TRANSPORTER 4"/>
    <property type="match status" value="1"/>
</dbReference>
<dbReference type="Pfam" id="PF01733">
    <property type="entry name" value="Nucleoside_tran"/>
    <property type="match status" value="1"/>
</dbReference>
<dbReference type="PIRSF" id="PIRSF016379">
    <property type="entry name" value="ENT"/>
    <property type="match status" value="1"/>
</dbReference>
<dbReference type="PRINTS" id="PR01130">
    <property type="entry name" value="DERENTRNSPRT"/>
</dbReference>
<dbReference type="SUPFAM" id="SSF103473">
    <property type="entry name" value="MFS general substrate transporter"/>
    <property type="match status" value="1"/>
</dbReference>
<protein>
    <recommendedName>
        <fullName evidence="18">Equilibrative nucleoside transporter 4</fullName>
        <shortName evidence="18">hENT4</shortName>
    </recommendedName>
    <alternativeName>
        <fullName evidence="16">Plasma membrane monoamine transporter</fullName>
        <shortName evidence="16">PMAT</shortName>
    </alternativeName>
    <alternativeName>
        <fullName evidence="16">Solute carrier family 29 member 4</fullName>
    </alternativeName>
</protein>
<gene>
    <name evidence="21" type="primary">SLC29A4</name>
    <name type="synonym">ENT4</name>
    <name type="synonym">PMAT</name>
    <name type="ORF">PSEC0113</name>
</gene>